<comment type="function">
    <text evidence="1">Catalyzes the transfer of endogenously produced octanoic acid from octanoyl-acyl-carrier-protein onto the lipoyl domains of lipoate-dependent enzymes. Lipoyl-ACP can also act as a substrate although octanoyl-ACP is likely to be the physiological substrate.</text>
</comment>
<comment type="catalytic activity">
    <reaction evidence="1">
        <text>octanoyl-[ACP] + L-lysyl-[protein] = N(6)-octanoyl-L-lysyl-[protein] + holo-[ACP] + H(+)</text>
        <dbReference type="Rhea" id="RHEA:17665"/>
        <dbReference type="Rhea" id="RHEA-COMP:9636"/>
        <dbReference type="Rhea" id="RHEA-COMP:9685"/>
        <dbReference type="Rhea" id="RHEA-COMP:9752"/>
        <dbReference type="Rhea" id="RHEA-COMP:9928"/>
        <dbReference type="ChEBI" id="CHEBI:15378"/>
        <dbReference type="ChEBI" id="CHEBI:29969"/>
        <dbReference type="ChEBI" id="CHEBI:64479"/>
        <dbReference type="ChEBI" id="CHEBI:78463"/>
        <dbReference type="ChEBI" id="CHEBI:78809"/>
        <dbReference type="EC" id="2.3.1.181"/>
    </reaction>
</comment>
<comment type="pathway">
    <text evidence="1">Protein modification; protein lipoylation via endogenous pathway; protein N(6)-(lipoyl)lysine from octanoyl-[acyl-carrier-protein]: step 1/2.</text>
</comment>
<comment type="subcellular location">
    <subcellularLocation>
        <location evidence="1">Cytoplasm</location>
    </subcellularLocation>
</comment>
<comment type="miscellaneous">
    <text evidence="1">In the reaction, the free carboxyl group of octanoic acid is attached via an amide linkage to the epsilon-amino group of a specific lysine residue of lipoyl domains of lipoate-dependent enzymes.</text>
</comment>
<comment type="similarity">
    <text evidence="1">Belongs to the LipB family.</text>
</comment>
<evidence type="ECO:0000255" key="1">
    <source>
        <dbReference type="HAMAP-Rule" id="MF_00013"/>
    </source>
</evidence>
<evidence type="ECO:0000255" key="2">
    <source>
        <dbReference type="PROSITE-ProRule" id="PRU01067"/>
    </source>
</evidence>
<protein>
    <recommendedName>
        <fullName evidence="1">Octanoyltransferase</fullName>
        <ecNumber evidence="1">2.3.1.181</ecNumber>
    </recommendedName>
    <alternativeName>
        <fullName evidence="1">Lipoate-protein ligase B</fullName>
    </alternativeName>
    <alternativeName>
        <fullName evidence="1">Lipoyl/octanoyl transferase</fullName>
    </alternativeName>
    <alternativeName>
        <fullName evidence="1">Octanoyl-[acyl-carrier-protein]-protein N-octanoyltransferase</fullName>
    </alternativeName>
</protein>
<keyword id="KW-0012">Acyltransferase</keyword>
<keyword id="KW-0963">Cytoplasm</keyword>
<keyword id="KW-1185">Reference proteome</keyword>
<keyword id="KW-0808">Transferase</keyword>
<dbReference type="EC" id="2.3.1.181" evidence="1"/>
<dbReference type="EMBL" id="CR522870">
    <property type="protein sequence ID" value="CAG35026.1"/>
    <property type="molecule type" value="Genomic_DNA"/>
</dbReference>
<dbReference type="RefSeq" id="WP_011187542.1">
    <property type="nucleotide sequence ID" value="NC_006138.1"/>
</dbReference>
<dbReference type="SMR" id="Q6ARJ9"/>
<dbReference type="STRING" id="177439.DP0297"/>
<dbReference type="KEGG" id="dps:DP0297"/>
<dbReference type="eggNOG" id="COG0321">
    <property type="taxonomic scope" value="Bacteria"/>
</dbReference>
<dbReference type="HOGENOM" id="CLU_035168_1_3_7"/>
<dbReference type="OrthoDB" id="9787061at2"/>
<dbReference type="UniPathway" id="UPA00538">
    <property type="reaction ID" value="UER00592"/>
</dbReference>
<dbReference type="Proteomes" id="UP000000602">
    <property type="component" value="Chromosome"/>
</dbReference>
<dbReference type="GO" id="GO:0005737">
    <property type="term" value="C:cytoplasm"/>
    <property type="evidence" value="ECO:0007669"/>
    <property type="project" value="UniProtKB-SubCell"/>
</dbReference>
<dbReference type="GO" id="GO:0033819">
    <property type="term" value="F:lipoyl(octanoyl) transferase activity"/>
    <property type="evidence" value="ECO:0007669"/>
    <property type="project" value="UniProtKB-EC"/>
</dbReference>
<dbReference type="GO" id="GO:0036211">
    <property type="term" value="P:protein modification process"/>
    <property type="evidence" value="ECO:0007669"/>
    <property type="project" value="InterPro"/>
</dbReference>
<dbReference type="CDD" id="cd16444">
    <property type="entry name" value="LipB"/>
    <property type="match status" value="1"/>
</dbReference>
<dbReference type="Gene3D" id="3.30.930.10">
    <property type="entry name" value="Bira Bifunctional Protein, Domain 2"/>
    <property type="match status" value="1"/>
</dbReference>
<dbReference type="HAMAP" id="MF_00013">
    <property type="entry name" value="LipB"/>
    <property type="match status" value="1"/>
</dbReference>
<dbReference type="InterPro" id="IPR045864">
    <property type="entry name" value="aa-tRNA-synth_II/BPL/LPL"/>
</dbReference>
<dbReference type="InterPro" id="IPR004143">
    <property type="entry name" value="BPL_LPL_catalytic"/>
</dbReference>
<dbReference type="InterPro" id="IPR000544">
    <property type="entry name" value="Octanoyltransferase"/>
</dbReference>
<dbReference type="InterPro" id="IPR020605">
    <property type="entry name" value="Octanoyltransferase_CS"/>
</dbReference>
<dbReference type="NCBIfam" id="TIGR00214">
    <property type="entry name" value="lipB"/>
    <property type="match status" value="1"/>
</dbReference>
<dbReference type="NCBIfam" id="NF010925">
    <property type="entry name" value="PRK14345.1"/>
    <property type="match status" value="1"/>
</dbReference>
<dbReference type="PANTHER" id="PTHR10993:SF7">
    <property type="entry name" value="LIPOYLTRANSFERASE 2, MITOCHONDRIAL-RELATED"/>
    <property type="match status" value="1"/>
</dbReference>
<dbReference type="PANTHER" id="PTHR10993">
    <property type="entry name" value="OCTANOYLTRANSFERASE"/>
    <property type="match status" value="1"/>
</dbReference>
<dbReference type="Pfam" id="PF21948">
    <property type="entry name" value="LplA-B_cat"/>
    <property type="match status" value="1"/>
</dbReference>
<dbReference type="PIRSF" id="PIRSF016262">
    <property type="entry name" value="LPLase"/>
    <property type="match status" value="1"/>
</dbReference>
<dbReference type="SUPFAM" id="SSF55681">
    <property type="entry name" value="Class II aaRS and biotin synthetases"/>
    <property type="match status" value="1"/>
</dbReference>
<dbReference type="PROSITE" id="PS51733">
    <property type="entry name" value="BPL_LPL_CATALYTIC"/>
    <property type="match status" value="1"/>
</dbReference>
<dbReference type="PROSITE" id="PS01313">
    <property type="entry name" value="LIPB"/>
    <property type="match status" value="1"/>
</dbReference>
<proteinExistence type="inferred from homology"/>
<sequence>MSFLVDLGATSYIACYATQQAVVARRCSGDLDRDCFLLTEHPPVYTLGKRGGEQHLHISKEMLAQKGIDVVSIERGGEITYHGPGQLVLYPILHLRKRKMRVTEYVGLLEETMIRLAADFGVRVVRNTRNAGVWTEDGRSKIGSIGIAIRHGVSFHGFAFNLNTDLEPFSWINPCGLTGVTATSLAREAGTDFDPAEVKKRLLSIVADLFGEFTVVDSLHSVK</sequence>
<organism>
    <name type="scientific">Desulfotalea psychrophila (strain LSv54 / DSM 12343)</name>
    <dbReference type="NCBI Taxonomy" id="177439"/>
    <lineage>
        <taxon>Bacteria</taxon>
        <taxon>Pseudomonadati</taxon>
        <taxon>Thermodesulfobacteriota</taxon>
        <taxon>Desulfobulbia</taxon>
        <taxon>Desulfobulbales</taxon>
        <taxon>Desulfocapsaceae</taxon>
        <taxon>Desulfotalea</taxon>
    </lineage>
</organism>
<name>LIPB_DESPS</name>
<gene>
    <name evidence="1" type="primary">lipB</name>
    <name type="ordered locus">DP0297</name>
</gene>
<accession>Q6ARJ9</accession>
<reference key="1">
    <citation type="journal article" date="2004" name="Environ. Microbiol.">
        <title>The genome of Desulfotalea psychrophila, a sulfate-reducing bacterium from permanently cold Arctic sediments.</title>
        <authorList>
            <person name="Rabus R."/>
            <person name="Ruepp A."/>
            <person name="Frickey T."/>
            <person name="Rattei T."/>
            <person name="Fartmann B."/>
            <person name="Stark M."/>
            <person name="Bauer M."/>
            <person name="Zibat A."/>
            <person name="Lombardot T."/>
            <person name="Becker I."/>
            <person name="Amann J."/>
            <person name="Gellner K."/>
            <person name="Teeling H."/>
            <person name="Leuschner W.D."/>
            <person name="Gloeckner F.-O."/>
            <person name="Lupas A.N."/>
            <person name="Amann R."/>
            <person name="Klenk H.-P."/>
        </authorList>
    </citation>
    <scope>NUCLEOTIDE SEQUENCE [LARGE SCALE GENOMIC DNA]</scope>
    <source>
        <strain>DSM 12343 / LSv54</strain>
    </source>
</reference>
<feature type="chain" id="PRO_0000062832" description="Octanoyltransferase">
    <location>
        <begin position="1"/>
        <end position="223"/>
    </location>
</feature>
<feature type="domain" description="BPL/LPL catalytic" evidence="2">
    <location>
        <begin position="30"/>
        <end position="214"/>
    </location>
</feature>
<feature type="active site" description="Acyl-thioester intermediate" evidence="1">
    <location>
        <position position="175"/>
    </location>
</feature>
<feature type="binding site" evidence="1">
    <location>
        <begin position="75"/>
        <end position="82"/>
    </location>
    <ligand>
        <name>substrate</name>
    </ligand>
</feature>
<feature type="binding site" evidence="1">
    <location>
        <begin position="144"/>
        <end position="146"/>
    </location>
    <ligand>
        <name>substrate</name>
    </ligand>
</feature>
<feature type="binding site" evidence="1">
    <location>
        <begin position="157"/>
        <end position="159"/>
    </location>
    <ligand>
        <name>substrate</name>
    </ligand>
</feature>
<feature type="site" description="Lowers pKa of active site Cys" evidence="1">
    <location>
        <position position="141"/>
    </location>
</feature>